<dbReference type="EC" id="3.5.2.-"/>
<dbReference type="EMBL" id="X91070">
    <property type="protein sequence ID" value="CAA62549.1"/>
    <property type="molecule type" value="Genomic_DNA"/>
</dbReference>
<dbReference type="SMR" id="Q44184"/>
<dbReference type="BRENDA" id="3.5.2.2">
    <property type="organism ID" value="200"/>
</dbReference>
<dbReference type="GO" id="GO:0005829">
    <property type="term" value="C:cytosol"/>
    <property type="evidence" value="ECO:0007669"/>
    <property type="project" value="TreeGrafter"/>
</dbReference>
<dbReference type="GO" id="GO:0016812">
    <property type="term" value="F:hydrolase activity, acting on carbon-nitrogen (but not peptide) bonds, in cyclic amides"/>
    <property type="evidence" value="ECO:0007669"/>
    <property type="project" value="TreeGrafter"/>
</dbReference>
<dbReference type="GO" id="GO:0046872">
    <property type="term" value="F:metal ion binding"/>
    <property type="evidence" value="ECO:0007669"/>
    <property type="project" value="UniProtKB-KW"/>
</dbReference>
<dbReference type="CDD" id="cd01314">
    <property type="entry name" value="D-HYD"/>
    <property type="match status" value="1"/>
</dbReference>
<dbReference type="FunFam" id="3.20.20.140:FF:000217">
    <property type="entry name" value="Dihydropyrimidinase-related protein 1"/>
    <property type="match status" value="1"/>
</dbReference>
<dbReference type="Gene3D" id="3.20.20.140">
    <property type="entry name" value="Metal-dependent hydrolases"/>
    <property type="match status" value="1"/>
</dbReference>
<dbReference type="Gene3D" id="2.30.40.10">
    <property type="entry name" value="Urease, subunit C, domain 1"/>
    <property type="match status" value="1"/>
</dbReference>
<dbReference type="InterPro" id="IPR006680">
    <property type="entry name" value="Amidohydro-rel"/>
</dbReference>
<dbReference type="InterPro" id="IPR011778">
    <property type="entry name" value="Hydantoinase/dihydroPyrase"/>
</dbReference>
<dbReference type="InterPro" id="IPR011059">
    <property type="entry name" value="Metal-dep_hydrolase_composite"/>
</dbReference>
<dbReference type="InterPro" id="IPR032466">
    <property type="entry name" value="Metal_Hydrolase"/>
</dbReference>
<dbReference type="InterPro" id="IPR050378">
    <property type="entry name" value="Metallo-dep_Hydrolases_sf"/>
</dbReference>
<dbReference type="InterPro" id="IPR011612">
    <property type="entry name" value="Urease_alpha_N_dom"/>
</dbReference>
<dbReference type="NCBIfam" id="TIGR02033">
    <property type="entry name" value="D-hydantoinase"/>
    <property type="match status" value="1"/>
</dbReference>
<dbReference type="PANTHER" id="PTHR11647:SF1">
    <property type="entry name" value="COLLAPSIN RESPONSE MEDIATOR PROTEIN"/>
    <property type="match status" value="1"/>
</dbReference>
<dbReference type="PANTHER" id="PTHR11647">
    <property type="entry name" value="HYDRANTOINASE/DIHYDROPYRIMIDINASE FAMILY MEMBER"/>
    <property type="match status" value="1"/>
</dbReference>
<dbReference type="Pfam" id="PF01979">
    <property type="entry name" value="Amidohydro_1"/>
    <property type="match status" value="1"/>
</dbReference>
<dbReference type="Pfam" id="PF00449">
    <property type="entry name" value="Urease_alpha"/>
    <property type="match status" value="1"/>
</dbReference>
<dbReference type="SUPFAM" id="SSF51338">
    <property type="entry name" value="Composite domain of metallo-dependent hydrolases"/>
    <property type="match status" value="2"/>
</dbReference>
<dbReference type="SUPFAM" id="SSF51556">
    <property type="entry name" value="Metallo-dependent hydrolases"/>
    <property type="match status" value="1"/>
</dbReference>
<organism>
    <name type="scientific">Rhizobium radiobacter</name>
    <name type="common">Agrobacterium tumefaciens</name>
    <name type="synonym">Agrobacterium radiobacter</name>
    <dbReference type="NCBI Taxonomy" id="358"/>
    <lineage>
        <taxon>Bacteria</taxon>
        <taxon>Pseudomonadati</taxon>
        <taxon>Pseudomonadota</taxon>
        <taxon>Alphaproteobacteria</taxon>
        <taxon>Hyphomicrobiales</taxon>
        <taxon>Rhizobiaceae</taxon>
        <taxon>Rhizobium/Agrobacterium group</taxon>
        <taxon>Agrobacterium</taxon>
        <taxon>Agrobacterium tumefaciens complex</taxon>
    </lineage>
</organism>
<sequence>MDIIIKNGTIVTADGISPADLGIKDGKIAQIGGTFGPAGRTIDASGRYVFPGGIDVHTHVETVSFNTQSADTFATATVAAACGGTTTIVDFCQQDRGHSLREAVAKWDGMAGGKSAIDYGYHIIVLDPTDSVIEELEVLPDLGITSFKVFMAYRGMNMIDDVTLLRTLDKAAKTGSLVMVHAENGDAADYLRDKFVADGKTAPIYHALSRPPRVEAEATARALALAEIVNAPIYIVHLTCEESFDELMRAKARGVHALAETCTQYLYLTKDDLERPDFEGAKYVFTPPPRTKKDQEILWNALRNGVLETVSSDHCSWLFEGHKDRGRNDFRAIPNGAPGVEERLMMVYQGVNEGRISLTQFVELVATRPAKVFGMFPEKGTVAVGSDADIVLWDPEAEMVIEQSAMHNAMDYSSYEGHKIKGVPKTVLLRGKVIVDEGTYVGAPTDGQFRKRRKYKQ</sequence>
<name>HYDA_RHIRD</name>
<accession>Q44184</accession>
<comment type="function">
    <text evidence="1">Catalyzes the stereospecific hydrolysis of the cyclic amide bond of D-hydantoin derivatives.</text>
</comment>
<comment type="cofactor">
    <cofactor evidence="3">
        <name>Zn(2+)</name>
        <dbReference type="ChEBI" id="CHEBI:29105"/>
    </cofactor>
    <text evidence="3">Binds 2 Zn(2+) ions per subunit.</text>
</comment>
<comment type="subunit">
    <text evidence="1">Homotetramer.</text>
</comment>
<comment type="PTM">
    <text evidence="1">Carboxylation allows a single lysine to coordinate two zinc ions.</text>
</comment>
<comment type="similarity">
    <text evidence="5">Belongs to the metallo-dependent hydrolases superfamily. Hydantoinase/dihydropyrimidinase family.</text>
</comment>
<evidence type="ECO:0000250" key="1"/>
<evidence type="ECO:0000250" key="2">
    <source>
        <dbReference type="UniProtKB" id="Q14117"/>
    </source>
</evidence>
<evidence type="ECO:0000250" key="3">
    <source>
        <dbReference type="UniProtKB" id="Q55DL0"/>
    </source>
</evidence>
<evidence type="ECO:0000250" key="4">
    <source>
        <dbReference type="UniProtKB" id="Q9P903"/>
    </source>
</evidence>
<evidence type="ECO:0000305" key="5"/>
<gene>
    <name type="primary">hyuA</name>
</gene>
<protein>
    <recommendedName>
        <fullName>D-hydantoinase</fullName>
        <ecNumber>3.5.2.-</ecNumber>
    </recommendedName>
</protein>
<keyword id="KW-0378">Hydrolase</keyword>
<keyword id="KW-0479">Metal-binding</keyword>
<keyword id="KW-0597">Phosphoprotein</keyword>
<keyword id="KW-0862">Zinc</keyword>
<feature type="chain" id="PRO_0000165932" description="D-hydantoinase">
    <location>
        <begin position="1"/>
        <end position="457"/>
    </location>
</feature>
<feature type="binding site" evidence="4">
    <location>
        <position position="57"/>
    </location>
    <ligand>
        <name>Zn(2+)</name>
        <dbReference type="ChEBI" id="CHEBI:29105"/>
        <label>1</label>
    </ligand>
</feature>
<feature type="binding site" evidence="4">
    <location>
        <position position="59"/>
    </location>
    <ligand>
        <name>Zn(2+)</name>
        <dbReference type="ChEBI" id="CHEBI:29105"/>
        <label>1</label>
    </ligand>
</feature>
<feature type="binding site" description="via carbamate group" evidence="4">
    <location>
        <position position="148"/>
    </location>
    <ligand>
        <name>Zn(2+)</name>
        <dbReference type="ChEBI" id="CHEBI:29105"/>
        <label>1</label>
    </ligand>
</feature>
<feature type="binding site" description="via carbamate group" evidence="4">
    <location>
        <position position="148"/>
    </location>
    <ligand>
        <name>Zn(2+)</name>
        <dbReference type="ChEBI" id="CHEBI:29105"/>
        <label>2</label>
    </ligand>
</feature>
<feature type="binding site" evidence="4">
    <location>
        <position position="153"/>
    </location>
    <ligand>
        <name>substrate</name>
    </ligand>
</feature>
<feature type="binding site" evidence="4">
    <location>
        <position position="181"/>
    </location>
    <ligand>
        <name>Zn(2+)</name>
        <dbReference type="ChEBI" id="CHEBI:29105"/>
        <label>2</label>
    </ligand>
</feature>
<feature type="binding site" evidence="4">
    <location>
        <position position="237"/>
    </location>
    <ligand>
        <name>Zn(2+)</name>
        <dbReference type="ChEBI" id="CHEBI:29105"/>
        <label>2</label>
    </ligand>
</feature>
<feature type="binding site" evidence="1">
    <location>
        <position position="286"/>
    </location>
    <ligand>
        <name>substrate</name>
    </ligand>
</feature>
<feature type="binding site" evidence="4">
    <location>
        <position position="313"/>
    </location>
    <ligand>
        <name>Zn(2+)</name>
        <dbReference type="ChEBI" id="CHEBI:29105"/>
        <label>1</label>
    </ligand>
</feature>
<feature type="binding site" evidence="4">
    <location>
        <position position="335"/>
    </location>
    <ligand>
        <name>substrate</name>
    </ligand>
</feature>
<feature type="modified residue" description="Phosphoserine" evidence="2">
    <location>
        <position position="69"/>
    </location>
</feature>
<feature type="modified residue" description="N6-carboxylysine" evidence="4">
    <location>
        <position position="148"/>
    </location>
</feature>
<reference key="1">
    <citation type="submission" date="1995-08" db="EMBL/GenBank/DDBJ databases">
        <authorList>
            <person name="Grifantini R."/>
        </authorList>
    </citation>
    <scope>NUCLEOTIDE SEQUENCE [GENOMIC DNA]</scope>
    <source>
        <strain>BCRC 13814 / CECT 4067 / NRRL B-11291</strain>
    </source>
</reference>
<proteinExistence type="inferred from homology"/>